<dbReference type="EC" id="2.6.1.57" evidence="1"/>
<dbReference type="EMBL" id="CP000611">
    <property type="protein sequence ID" value="ABQ75601.1"/>
    <property type="molecule type" value="Genomic_DNA"/>
</dbReference>
<dbReference type="SMR" id="A5U9A1"/>
<dbReference type="KEGG" id="mra:MRA_3812"/>
<dbReference type="eggNOG" id="COG0079">
    <property type="taxonomic scope" value="Bacteria"/>
</dbReference>
<dbReference type="HOGENOM" id="CLU_017584_3_3_11"/>
<dbReference type="Proteomes" id="UP000001988">
    <property type="component" value="Chromosome"/>
</dbReference>
<dbReference type="GO" id="GO:0008793">
    <property type="term" value="F:aromatic-amino-acid transaminase activity"/>
    <property type="evidence" value="ECO:0007669"/>
    <property type="project" value="UniProtKB-UniRule"/>
</dbReference>
<dbReference type="GO" id="GO:0004400">
    <property type="term" value="F:histidinol-phosphate transaminase activity"/>
    <property type="evidence" value="ECO:0007669"/>
    <property type="project" value="InterPro"/>
</dbReference>
<dbReference type="GO" id="GO:0030170">
    <property type="term" value="F:pyridoxal phosphate binding"/>
    <property type="evidence" value="ECO:0007669"/>
    <property type="project" value="UniProtKB-UniRule"/>
</dbReference>
<dbReference type="GO" id="GO:0000105">
    <property type="term" value="P:L-histidine biosynthetic process"/>
    <property type="evidence" value="ECO:0007669"/>
    <property type="project" value="InterPro"/>
</dbReference>
<dbReference type="CDD" id="cd00609">
    <property type="entry name" value="AAT_like"/>
    <property type="match status" value="1"/>
</dbReference>
<dbReference type="Gene3D" id="3.90.1150.10">
    <property type="entry name" value="Aspartate Aminotransferase, domain 1"/>
    <property type="match status" value="1"/>
</dbReference>
<dbReference type="Gene3D" id="3.40.640.10">
    <property type="entry name" value="Type I PLP-dependent aspartate aminotransferase-like (Major domain)"/>
    <property type="match status" value="1"/>
</dbReference>
<dbReference type="HAMAP" id="MF_01023">
    <property type="entry name" value="HisC_aminotrans_2"/>
    <property type="match status" value="1"/>
</dbReference>
<dbReference type="HAMAP" id="MF_01513">
    <property type="entry name" value="Phe_aminotrans_2"/>
    <property type="match status" value="1"/>
</dbReference>
<dbReference type="InterPro" id="IPR001917">
    <property type="entry name" value="Aminotrans_II_pyridoxalP_BS"/>
</dbReference>
<dbReference type="InterPro" id="IPR004839">
    <property type="entry name" value="Aminotransferase_I/II_large"/>
</dbReference>
<dbReference type="InterPro" id="IPR024892">
    <property type="entry name" value="ArAT"/>
</dbReference>
<dbReference type="InterPro" id="IPR005861">
    <property type="entry name" value="HisP_aminotrans"/>
</dbReference>
<dbReference type="InterPro" id="IPR050106">
    <property type="entry name" value="HistidinolP_aminotransfase"/>
</dbReference>
<dbReference type="InterPro" id="IPR015424">
    <property type="entry name" value="PyrdxlP-dep_Trfase"/>
</dbReference>
<dbReference type="InterPro" id="IPR015421">
    <property type="entry name" value="PyrdxlP-dep_Trfase_major"/>
</dbReference>
<dbReference type="InterPro" id="IPR015422">
    <property type="entry name" value="PyrdxlP-dep_Trfase_small"/>
</dbReference>
<dbReference type="NCBIfam" id="NF002878">
    <property type="entry name" value="PRK03321.1"/>
    <property type="match status" value="1"/>
</dbReference>
<dbReference type="PANTHER" id="PTHR43643:SF3">
    <property type="entry name" value="HISTIDINOL-PHOSPHATE AMINOTRANSFERASE"/>
    <property type="match status" value="1"/>
</dbReference>
<dbReference type="PANTHER" id="PTHR43643">
    <property type="entry name" value="HISTIDINOL-PHOSPHATE AMINOTRANSFERASE 2"/>
    <property type="match status" value="1"/>
</dbReference>
<dbReference type="Pfam" id="PF00155">
    <property type="entry name" value="Aminotran_1_2"/>
    <property type="match status" value="1"/>
</dbReference>
<dbReference type="SUPFAM" id="SSF53383">
    <property type="entry name" value="PLP-dependent transferases"/>
    <property type="match status" value="1"/>
</dbReference>
<dbReference type="PROSITE" id="PS00599">
    <property type="entry name" value="AA_TRANSFER_CLASS_2"/>
    <property type="match status" value="1"/>
</dbReference>
<protein>
    <recommendedName>
        <fullName evidence="1">Aromatic amino acid aminotransferase</fullName>
        <shortName evidence="1">ArAT</shortName>
        <ecNumber evidence="1">2.6.1.57</ecNumber>
    </recommendedName>
</protein>
<evidence type="ECO:0000255" key="1">
    <source>
        <dbReference type="HAMAP-Rule" id="MF_01513"/>
    </source>
</evidence>
<comment type="function">
    <text evidence="1">Aminotransferase that catalyzes the conversion of aromatic amino acids and 2-oxoglutarate into corresponding aromatic oxo acids and L-glutamate.</text>
</comment>
<comment type="catalytic activity">
    <reaction evidence="1">
        <text>an aromatic L-alpha-amino acid + 2-oxoglutarate = an aromatic oxo-acid + L-glutamate</text>
        <dbReference type="Rhea" id="RHEA:17533"/>
        <dbReference type="ChEBI" id="CHEBI:16810"/>
        <dbReference type="ChEBI" id="CHEBI:29985"/>
        <dbReference type="ChEBI" id="CHEBI:73309"/>
        <dbReference type="ChEBI" id="CHEBI:84824"/>
        <dbReference type="EC" id="2.6.1.57"/>
    </reaction>
</comment>
<comment type="cofactor">
    <cofactor evidence="1">
        <name>pyridoxal 5'-phosphate</name>
        <dbReference type="ChEBI" id="CHEBI:597326"/>
    </cofactor>
</comment>
<comment type="subunit">
    <text evidence="1">Homodimer.</text>
</comment>
<comment type="similarity">
    <text evidence="1">Belongs to the class-II pyridoxal-phosphate-dependent aminotransferase family.</text>
</comment>
<keyword id="KW-0032">Aminotransferase</keyword>
<keyword id="KW-0663">Pyridoxal phosphate</keyword>
<keyword id="KW-1185">Reference proteome</keyword>
<keyword id="KW-0808">Transferase</keyword>
<name>PATR_MYCTA</name>
<gene>
    <name evidence="1" type="primary">pat</name>
    <name type="ordered locus">MRA_3812</name>
</gene>
<organism>
    <name type="scientific">Mycobacterium tuberculosis (strain ATCC 25177 / H37Ra)</name>
    <dbReference type="NCBI Taxonomy" id="419947"/>
    <lineage>
        <taxon>Bacteria</taxon>
        <taxon>Bacillati</taxon>
        <taxon>Actinomycetota</taxon>
        <taxon>Actinomycetes</taxon>
        <taxon>Mycobacteriales</taxon>
        <taxon>Mycobacteriaceae</taxon>
        <taxon>Mycobacterium</taxon>
        <taxon>Mycobacterium tuberculosis complex</taxon>
    </lineage>
</organism>
<feature type="chain" id="PRO_1000024500" description="Aromatic amino acid aminotransferase">
    <location>
        <begin position="1"/>
        <end position="353"/>
    </location>
</feature>
<feature type="modified residue" description="N6-(pyridoxal phosphate)lysine" evidence="1">
    <location>
        <position position="217"/>
    </location>
</feature>
<proteinExistence type="inferred from homology"/>
<reference key="1">
    <citation type="journal article" date="2008" name="PLoS ONE">
        <title>Genetic basis of virulence attenuation revealed by comparative genomic analysis of Mycobacterium tuberculosis strain H37Ra versus H37Rv.</title>
        <authorList>
            <person name="Zheng H."/>
            <person name="Lu L."/>
            <person name="Wang B."/>
            <person name="Pu S."/>
            <person name="Zhang X."/>
            <person name="Zhu G."/>
            <person name="Shi W."/>
            <person name="Zhang L."/>
            <person name="Wang H."/>
            <person name="Wang S."/>
            <person name="Zhao G."/>
            <person name="Zhang Y."/>
        </authorList>
    </citation>
    <scope>NUCLEOTIDE SEQUENCE [LARGE SCALE GENOMIC DNA]</scope>
    <source>
        <strain>ATCC 25177 / H37Ra</strain>
    </source>
</reference>
<sequence>MTARLRPELAGLPVYVPGKTVPGAIKLASNETVFGPLPSVRAAIDRATDTVNRYPDNGCVQLKAALARHLGPDFAPEHVAVGCGSVSLCQQLVQVTASVGDEVVFGWRSFELYPPQVRVAGAIPIQVPLTDHTFDLYAMLATVTDRTRLIFVCNPNNPTSTVVGPDALARFVEAVPAHILIAIDEAYVEYIRDGMRPDSLGLVRAHNNVVVLRTFSKAYGLAGLRIGYAIGHPDVITALDKVYVPFTVSSIGQAAAIASLDAADELLARTDTVVAERARVSAELRAAGFTLPPSQANFVWLPLGSRTQDFVEQAADARIVVRPYGTDGVRVTVAAPEENDAFLRFARRWRSDQ</sequence>
<accession>A5U9A1</accession>